<sequence>MTLERLWQVLDPLWADPRVLSALFCGSAMAVVLLKRLGHRRIQQKMEEARRARDLALERMEKAARRFKQENPGTQTAHILSLTMVELAEKLKEGSLSPESVLYSYMGKALEVNREVNCVIDFIHGCEDQLQKVKQQKEKGLLYGIPVSIKDHIDCKGHVSSAGLVKFLGQVKEEDSVIVQVLKSQGAIPFVKTNIPQTMINYDCSNLIFGQTLNPLNHQKTPGGSSGGEGALIAGGGSLLGIGSDVAGSIRLPSSFCGLCGLKPTGFRISKLGVISPITGMNSVIGMLGPIARDVDSLALCMKALLCEEMFRLDPTVPPIPFDEEVYTSSKPLRIGYYEEDGYFQPSPSMKRAVQQTRKLLQEAGHTIVPFAPPKIDYVVDELFTRGIFSDGAAHLVDSFKGDIVDPNLKSQFNTYKLPALVKRILAIILKPIYPRIARDLSALCGVGSAKNLWDQHTAVGLPH</sequence>
<organism>
    <name type="scientific">Gallus gallus</name>
    <name type="common">Chicken</name>
    <dbReference type="NCBI Taxonomy" id="9031"/>
    <lineage>
        <taxon>Eukaryota</taxon>
        <taxon>Metazoa</taxon>
        <taxon>Chordata</taxon>
        <taxon>Craniata</taxon>
        <taxon>Vertebrata</taxon>
        <taxon>Euteleostomi</taxon>
        <taxon>Archelosauria</taxon>
        <taxon>Archosauria</taxon>
        <taxon>Dinosauria</taxon>
        <taxon>Saurischia</taxon>
        <taxon>Theropoda</taxon>
        <taxon>Coelurosauria</taxon>
        <taxon>Aves</taxon>
        <taxon>Neognathae</taxon>
        <taxon>Galloanserae</taxon>
        <taxon>Galliformes</taxon>
        <taxon>Phasianidae</taxon>
        <taxon>Phasianinae</taxon>
        <taxon>Gallus</taxon>
    </lineage>
</organism>
<comment type="function">
    <text>May have a vitamin D3 hydroxylase regulatory function.</text>
</comment>
<comment type="subcellular location">
    <subcellularLocation>
        <location>Mitochondrion inner membrane</location>
    </subcellularLocation>
</comment>
<comment type="tissue specificity">
    <text>Kidney.</text>
</comment>
<comment type="similarity">
    <text evidence="3">Belongs to the amidase family.</text>
</comment>
<name>VDHAP_CHICK</name>
<accession>Q90578</accession>
<protein>
    <recommendedName>
        <fullName>Vitamin D3 hydroxylase-associated protein</fullName>
        <shortName>VDHAP</shortName>
    </recommendedName>
</protein>
<reference key="1">
    <citation type="journal article" date="1994" name="J. Biol. Chem.">
        <title>cDNA cloning and characterization of a vitamin D3 hydroxylase-associated protein.</title>
        <authorList>
            <person name="Ettinger R.A."/>
            <person name="Ismail R."/>
            <person name="Deluca H.F."/>
        </authorList>
    </citation>
    <scope>NUCLEOTIDE SEQUENCE [MRNA]</scope>
    <source>
        <strain>White leghorn</strain>
        <tissue>Kidney</tissue>
    </source>
</reference>
<reference key="2">
    <citation type="journal article" date="1992" name="J. Biol. Chem.">
        <title>Immunopurified 25-hydroxyvitamin D 1 alpha-hydroxylase and 1,25-dihydroxyvitamin D 24-hydroxylase are closely related but distinct enzymes.</title>
        <authorList>
            <person name="Burgos-Trinidad M."/>
            <person name="Ismail R."/>
            <person name="Ettinger R.A."/>
            <person name="Prahl J.M."/>
            <person name="Deluca H.F."/>
        </authorList>
    </citation>
    <scope>PROTEIN SEQUENCE OF 2-21</scope>
    <source>
        <strain>White leghorn</strain>
        <tissue>Kidney</tissue>
    </source>
</reference>
<dbReference type="EMBL" id="U00694">
    <property type="protein sequence ID" value="AAC59645.1"/>
    <property type="molecule type" value="mRNA"/>
</dbReference>
<dbReference type="PIR" id="A53101">
    <property type="entry name" value="A53101"/>
</dbReference>
<dbReference type="RefSeq" id="NP_990307.2">
    <property type="nucleotide sequence ID" value="NM_204976.2"/>
</dbReference>
<dbReference type="SMR" id="Q90578"/>
<dbReference type="FunCoup" id="Q90578">
    <property type="interactions" value="39"/>
</dbReference>
<dbReference type="STRING" id="9031.ENSGALP00000072052"/>
<dbReference type="PaxDb" id="9031-ENSGALP00000016939"/>
<dbReference type="GeneID" id="395824"/>
<dbReference type="KEGG" id="gga:395824"/>
<dbReference type="CTD" id="395824"/>
<dbReference type="VEuPathDB" id="HostDB:geneid_395824"/>
<dbReference type="eggNOG" id="KOG1212">
    <property type="taxonomic scope" value="Eukaryota"/>
</dbReference>
<dbReference type="InParanoid" id="Q90578"/>
<dbReference type="OrthoDB" id="6428749at2759"/>
<dbReference type="PhylomeDB" id="Q90578"/>
<dbReference type="SABIO-RK" id="Q90578"/>
<dbReference type="PRO" id="PR:Q90578"/>
<dbReference type="Proteomes" id="UP000000539">
    <property type="component" value="Unassembled WGS sequence"/>
</dbReference>
<dbReference type="GO" id="GO:0005743">
    <property type="term" value="C:mitochondrial inner membrane"/>
    <property type="evidence" value="ECO:0007669"/>
    <property type="project" value="UniProtKB-SubCell"/>
</dbReference>
<dbReference type="GO" id="GO:0005739">
    <property type="term" value="C:mitochondrion"/>
    <property type="evidence" value="ECO:0000314"/>
    <property type="project" value="AgBase"/>
</dbReference>
<dbReference type="GO" id="GO:0004040">
    <property type="term" value="F:amidase activity"/>
    <property type="evidence" value="ECO:0000314"/>
    <property type="project" value="AgBase"/>
</dbReference>
<dbReference type="GO" id="GO:0017064">
    <property type="term" value="F:fatty acid amide hydrolase activity"/>
    <property type="evidence" value="ECO:0000318"/>
    <property type="project" value="GO_Central"/>
</dbReference>
<dbReference type="GO" id="GO:0009062">
    <property type="term" value="P:fatty acid catabolic process"/>
    <property type="evidence" value="ECO:0000318"/>
    <property type="project" value="GO_Central"/>
</dbReference>
<dbReference type="FunFam" id="3.90.1300.10:FF:000016">
    <property type="entry name" value="Vitamin D3 hydroxylase-associated protein"/>
    <property type="match status" value="1"/>
</dbReference>
<dbReference type="Gene3D" id="3.90.1300.10">
    <property type="entry name" value="Amidase signature (AS) domain"/>
    <property type="match status" value="1"/>
</dbReference>
<dbReference type="InterPro" id="IPR020556">
    <property type="entry name" value="Amidase_CS"/>
</dbReference>
<dbReference type="InterPro" id="IPR023631">
    <property type="entry name" value="Amidase_dom"/>
</dbReference>
<dbReference type="InterPro" id="IPR036928">
    <property type="entry name" value="AS_sf"/>
</dbReference>
<dbReference type="InterPro" id="IPR052096">
    <property type="entry name" value="Endocannabinoid_amidase"/>
</dbReference>
<dbReference type="PANTHER" id="PTHR45847">
    <property type="entry name" value="FATTY ACID AMIDE HYDROLASE"/>
    <property type="match status" value="1"/>
</dbReference>
<dbReference type="PANTHER" id="PTHR45847:SF8">
    <property type="entry name" value="FATTY ACID AMIDE HYDROLASE-RELATED"/>
    <property type="match status" value="1"/>
</dbReference>
<dbReference type="Pfam" id="PF01425">
    <property type="entry name" value="Amidase"/>
    <property type="match status" value="1"/>
</dbReference>
<dbReference type="SUPFAM" id="SSF75304">
    <property type="entry name" value="Amidase signature (AS) enzymes"/>
    <property type="match status" value="1"/>
</dbReference>
<dbReference type="PROSITE" id="PS00571">
    <property type="entry name" value="AMIDASES"/>
    <property type="match status" value="1"/>
</dbReference>
<keyword id="KW-0903">Direct protein sequencing</keyword>
<keyword id="KW-0378">Hydrolase</keyword>
<keyword id="KW-0472">Membrane</keyword>
<keyword id="KW-0496">Mitochondrion</keyword>
<keyword id="KW-0999">Mitochondrion inner membrane</keyword>
<keyword id="KW-1185">Reference proteome</keyword>
<evidence type="ECO:0000250" key="1"/>
<evidence type="ECO:0000269" key="2">
    <source>
    </source>
</evidence>
<evidence type="ECO:0000305" key="3"/>
<proteinExistence type="evidence at protein level"/>
<feature type="initiator methionine" description="Removed" evidence="2">
    <location>
        <position position="1"/>
    </location>
</feature>
<feature type="chain" id="PRO_0000105268" description="Vitamin D3 hydroxylase-associated protein">
    <location>
        <begin position="2"/>
        <end position="464"/>
    </location>
</feature>
<feature type="active site" description="Charge relay system" evidence="1">
    <location>
        <position position="150"/>
    </location>
</feature>
<feature type="active site" description="Charge relay system" evidence="1">
    <location>
        <position position="225"/>
    </location>
</feature>
<feature type="active site" description="Acyl-ester intermediate" evidence="1">
    <location>
        <position position="249"/>
    </location>
</feature>
<feature type="sequence conflict" description="In Ref. 2; AA sequence." evidence="3" ref="2">
    <original>LW</original>
    <variation>PS</variation>
    <location>
        <begin position="6"/>
        <end position="7"/>
    </location>
</feature>
<feature type="sequence conflict" description="In Ref. 2; AA sequence." evidence="3" ref="2">
    <original>W</original>
    <variation>G</variation>
    <location>
        <position position="14"/>
    </location>
</feature>